<dbReference type="PIR" id="S36827">
    <property type="entry name" value="S36827"/>
</dbReference>
<dbReference type="PDB" id="1DIP">
    <property type="method" value="NMR"/>
    <property type="chains" value="A/B=1-77"/>
</dbReference>
<dbReference type="PDBsum" id="1DIP"/>
<dbReference type="SMR" id="P80220"/>
<dbReference type="FunCoup" id="P80220">
    <property type="interactions" value="18"/>
</dbReference>
<dbReference type="STRING" id="9823.ENSSSCP00000062162"/>
<dbReference type="iPTMnet" id="P80220"/>
<dbReference type="PaxDb" id="9823-ENSSSCP00000021368"/>
<dbReference type="PeptideAtlas" id="P80220"/>
<dbReference type="eggNOG" id="KOG4797">
    <property type="taxonomic scope" value="Eukaryota"/>
</dbReference>
<dbReference type="HOGENOM" id="CLU_148757_2_0_1"/>
<dbReference type="InParanoid" id="P80220"/>
<dbReference type="EvolutionaryTrace" id="P80220"/>
<dbReference type="Proteomes" id="UP000008227">
    <property type="component" value="Unplaced"/>
</dbReference>
<dbReference type="Proteomes" id="UP000314985">
    <property type="component" value="Unplaced"/>
</dbReference>
<dbReference type="Proteomes" id="UP000694570">
    <property type="component" value="Unplaced"/>
</dbReference>
<dbReference type="Proteomes" id="UP000694571">
    <property type="component" value="Unplaced"/>
</dbReference>
<dbReference type="Proteomes" id="UP000694720">
    <property type="component" value="Unplaced"/>
</dbReference>
<dbReference type="Proteomes" id="UP000694722">
    <property type="component" value="Unplaced"/>
</dbReference>
<dbReference type="Proteomes" id="UP000694723">
    <property type="component" value="Unplaced"/>
</dbReference>
<dbReference type="Proteomes" id="UP000694724">
    <property type="component" value="Unplaced"/>
</dbReference>
<dbReference type="Proteomes" id="UP000694725">
    <property type="component" value="Unplaced"/>
</dbReference>
<dbReference type="Proteomes" id="UP000694726">
    <property type="component" value="Unplaced"/>
</dbReference>
<dbReference type="Proteomes" id="UP000694727">
    <property type="component" value="Unplaced"/>
</dbReference>
<dbReference type="Proteomes" id="UP000694728">
    <property type="component" value="Unplaced"/>
</dbReference>
<dbReference type="GO" id="GO:0005737">
    <property type="term" value="C:cytoplasm"/>
    <property type="evidence" value="ECO:0007669"/>
    <property type="project" value="UniProtKB-SubCell"/>
</dbReference>
<dbReference type="GO" id="GO:0005634">
    <property type="term" value="C:nucleus"/>
    <property type="evidence" value="ECO:0007669"/>
    <property type="project" value="UniProtKB-SubCell"/>
</dbReference>
<dbReference type="GO" id="GO:0006357">
    <property type="term" value="P:regulation of transcription by RNA polymerase II"/>
    <property type="evidence" value="ECO:0007669"/>
    <property type="project" value="InterPro"/>
</dbReference>
<dbReference type="CDD" id="cd21940">
    <property type="entry name" value="ZIP_TSC22D3"/>
    <property type="match status" value="1"/>
</dbReference>
<dbReference type="DisProt" id="DP00759"/>
<dbReference type="FunFam" id="1.20.5.490:FF:000002">
    <property type="entry name" value="TSC22 domain family, member 1"/>
    <property type="match status" value="1"/>
</dbReference>
<dbReference type="Gene3D" id="1.20.5.490">
    <property type="entry name" value="Single helix bin"/>
    <property type="match status" value="1"/>
</dbReference>
<dbReference type="InterPro" id="IPR000580">
    <property type="entry name" value="TSC22/Bun"/>
</dbReference>
<dbReference type="InterPro" id="IPR047862">
    <property type="entry name" value="TSC22/BUN_CS"/>
</dbReference>
<dbReference type="PANTHER" id="PTHR12348">
    <property type="entry name" value="TSC22"/>
    <property type="match status" value="1"/>
</dbReference>
<dbReference type="PANTHER" id="PTHR12348:SF24">
    <property type="entry name" value="TSC22 DOMAIN FAMILY PROTEIN 3"/>
    <property type="match status" value="1"/>
</dbReference>
<dbReference type="Pfam" id="PF01166">
    <property type="entry name" value="TSC22"/>
    <property type="match status" value="1"/>
</dbReference>
<dbReference type="SUPFAM" id="SSF58026">
    <property type="entry name" value="Delta-sleep-inducing peptide immunoreactive peptide"/>
    <property type="match status" value="1"/>
</dbReference>
<dbReference type="PROSITE" id="PS01289">
    <property type="entry name" value="TSC22"/>
    <property type="match status" value="1"/>
</dbReference>
<proteinExistence type="evidence at protein level"/>
<accession>P80220</accession>
<evidence type="ECO:0000250" key="1"/>
<evidence type="ECO:0000250" key="2">
    <source>
        <dbReference type="UniProtKB" id="Q99576"/>
    </source>
</evidence>
<evidence type="ECO:0000256" key="3">
    <source>
        <dbReference type="SAM" id="MobiDB-lite"/>
    </source>
</evidence>
<evidence type="ECO:0000269" key="4">
    <source>
    </source>
</evidence>
<evidence type="ECO:0000305" key="5"/>
<evidence type="ECO:0007829" key="6">
    <source>
        <dbReference type="PDB" id="1DIP"/>
    </source>
</evidence>
<reference key="1">
    <citation type="journal article" date="1993" name="Eur. J. Biochem.">
        <title>A novel 77-residue peptide from porcine brain contains a leucine-zipper motif and is recognized by an antiserum to delta-sleep-inducing peptide.</title>
        <authorList>
            <person name="Sillard R."/>
            <person name="Schulz-Knappe P."/>
            <person name="Vogel P."/>
            <person name="Raida M."/>
            <person name="Bensch K.W."/>
            <person name="Forssmann W.-G."/>
            <person name="Mutt M."/>
        </authorList>
    </citation>
    <scope>PROTEIN SEQUENCE</scope>
    <scope>ACETYLATION AT MET-1</scope>
    <source>
        <tissue>Brain</tissue>
    </source>
</reference>
<reference key="2">
    <citation type="journal article" date="1997" name="J. Biol. Chem.">
        <title>Solution structure of porcine delta sleep-inducing peptide immunoreactive peptide A homolog of the shortsighted gene product.</title>
        <authorList>
            <person name="Seidel G."/>
            <person name="Adermann K."/>
            <person name="Schindler T."/>
            <person name="Ejchart A."/>
            <person name="Jaenicke R."/>
            <person name="Forssmann W.-G."/>
            <person name="Roesch P."/>
        </authorList>
    </citation>
    <scope>STRUCTURE BY NMR</scope>
</reference>
<comment type="function">
    <text evidence="1">Protects T-cells from IL2 deprivation-induced apoptosis through the inhibition of FOXO3A transcriptional activity that leads to the down-regulation of the pro-apoptotic factor BCL2L11. In macrophages, plays a role in the anti-inflammatory and immunosuppressive effects of glucocorticoids and IL10. In T-cells, inhibits anti-CD3-induced NFKB1 nuclear translocation. In vitro, suppresses AP1 and NFKB1 DNA-binding activities. Inhibits myogenic differentiation and mediates anti-myogenic effects of glucocorticoids by binding and regulating MYOD1 and HDAC1 transcriptional activity resulting in reduced expression of MYOG (By similarity).</text>
</comment>
<comment type="subunit">
    <text evidence="1">Can form homodimers, however it is likely to function as a monomer. Interacts with AP1 and NFKB1. Interacts with MYOD1. Interacts with HDAC1; this interaction affects HDAC1 activity on MYOG promoter and thus inhibits MYOD1 transcriptional activity (By similarity).</text>
</comment>
<comment type="subcellular location">
    <subcellularLocation>
        <location evidence="1">Cytoplasm</location>
    </subcellularLocation>
    <subcellularLocation>
        <location evidence="1">Nucleus</location>
    </subcellularLocation>
    <text evidence="1">Localization depends on differentiation status of myoblasts. In undifferentiated myoblasts, localizes to the cytoplasm, but in differentiating myoblasts is localized to the nucleus (By similarity).</text>
</comment>
<comment type="induction">
    <text evidence="1">By glucocorticoids in lymphoid cells and upon IL4, IL10, IL13 or glucocorticoid treatment in monocyte/macrophage cells. Transiently induced by IL2 deprivation in T-cells. Expression is up-regulated by synthetic glucocorticoid dexamethasone in differentiating myoblasts (By similarity).</text>
</comment>
<comment type="domain">
    <text evidence="1">The leucine-zipper is involved in homodimerization.</text>
</comment>
<comment type="similarity">
    <text evidence="5">Belongs to the TSC-22/Dip/Bun family.</text>
</comment>
<protein>
    <recommendedName>
        <fullName>TSC22 domain family protein 3</fullName>
    </recommendedName>
    <alternativeName>
        <fullName>DSIP-immunoreactive peptide</fullName>
        <shortName>DIP protein</shortName>
    </alternativeName>
    <alternativeName>
        <fullName>Delta sleep-inducing peptide immunoreactor</fullName>
    </alternativeName>
    <alternativeName>
        <fullName>Glucocorticoid-induced leucine zipper protein</fullName>
    </alternativeName>
</protein>
<sequence>MDLVKNHLMYAVREEVEILKEQIRELVEKNSQLERENTLLKTLASPEQLEKFQSRLSPEEPAPETPEAPEAPGGSAV</sequence>
<feature type="chain" id="PRO_0000219372" description="TSC22 domain family protein 3">
    <location>
        <begin position="1"/>
        <end position="77"/>
    </location>
</feature>
<feature type="region of interest" description="Leucine-zipper">
    <location>
        <begin position="19"/>
        <end position="40"/>
    </location>
</feature>
<feature type="region of interest" description="Disordered" evidence="3">
    <location>
        <begin position="41"/>
        <end position="77"/>
    </location>
</feature>
<feature type="compositionally biased region" description="Low complexity" evidence="3">
    <location>
        <begin position="68"/>
        <end position="77"/>
    </location>
</feature>
<feature type="modified residue" description="N-acetylmethionine" evidence="4">
    <location>
        <position position="1"/>
    </location>
</feature>
<feature type="modified residue" description="Phosphoserine" evidence="2">
    <location>
        <position position="45"/>
    </location>
</feature>
<feature type="turn" evidence="6">
    <location>
        <begin position="4"/>
        <end position="6"/>
    </location>
</feature>
<feature type="helix" evidence="6">
    <location>
        <begin position="7"/>
        <end position="10"/>
    </location>
</feature>
<feature type="helix" evidence="6">
    <location>
        <begin position="17"/>
        <end position="43"/>
    </location>
</feature>
<feature type="strand" evidence="6">
    <location>
        <begin position="45"/>
        <end position="47"/>
    </location>
</feature>
<feature type="strand" evidence="6">
    <location>
        <begin position="53"/>
        <end position="56"/>
    </location>
</feature>
<feature type="strand" evidence="6">
    <location>
        <begin position="62"/>
        <end position="64"/>
    </location>
</feature>
<gene>
    <name type="primary">TSC22D3</name>
    <name type="synonym">DSIPI</name>
    <name type="synonym">GILZ</name>
</gene>
<keyword id="KW-0002">3D-structure</keyword>
<keyword id="KW-0007">Acetylation</keyword>
<keyword id="KW-0963">Cytoplasm</keyword>
<keyword id="KW-0903">Direct protein sequencing</keyword>
<keyword id="KW-0539">Nucleus</keyword>
<keyword id="KW-0597">Phosphoprotein</keyword>
<keyword id="KW-1185">Reference proteome</keyword>
<name>T22D3_PIG</name>
<organism>
    <name type="scientific">Sus scrofa</name>
    <name type="common">Pig</name>
    <dbReference type="NCBI Taxonomy" id="9823"/>
    <lineage>
        <taxon>Eukaryota</taxon>
        <taxon>Metazoa</taxon>
        <taxon>Chordata</taxon>
        <taxon>Craniata</taxon>
        <taxon>Vertebrata</taxon>
        <taxon>Euteleostomi</taxon>
        <taxon>Mammalia</taxon>
        <taxon>Eutheria</taxon>
        <taxon>Laurasiatheria</taxon>
        <taxon>Artiodactyla</taxon>
        <taxon>Suina</taxon>
        <taxon>Suidae</taxon>
        <taxon>Sus</taxon>
    </lineage>
</organism>